<comment type="function">
    <text evidence="1 2 3">Responsible for the provision of inositol required for synthesis of phosphatidylinositol and polyphosphoinositides.</text>
</comment>
<comment type="catalytic activity">
    <reaction>
        <text>a myo-inositol phosphate + H2O = myo-inositol + phosphate</text>
        <dbReference type="Rhea" id="RHEA:24056"/>
        <dbReference type="ChEBI" id="CHEBI:15377"/>
        <dbReference type="ChEBI" id="CHEBI:17268"/>
        <dbReference type="ChEBI" id="CHEBI:43474"/>
        <dbReference type="ChEBI" id="CHEBI:84139"/>
        <dbReference type="EC" id="3.1.3.25"/>
    </reaction>
</comment>
<comment type="cofactor">
    <cofactor>
        <name>Mg(2+)</name>
        <dbReference type="ChEBI" id="CHEBI:18420"/>
    </cofactor>
</comment>
<comment type="activity regulation">
    <text evidence="2">Inhibited by Li(+) and Na(+).</text>
</comment>
<comment type="biophysicochemical properties">
    <kinetics>
        <KM evidence="2">0.08 mM for inositol 1-phosphate</KM>
        <Vmax evidence="2">20.0 umol/min/mg enzyme for inositol 1-phosphate</Vmax>
    </kinetics>
</comment>
<comment type="pathway">
    <text>Polyol metabolism; myo-inositol biosynthesis; myo-inositol from D-glucose 6-phosphate: step 2/2.</text>
</comment>
<comment type="subcellular location">
    <subcellularLocation>
        <location evidence="4">Cytoplasm</location>
    </subcellularLocation>
    <subcellularLocation>
        <location evidence="4">Nucleus</location>
    </subcellularLocation>
</comment>
<comment type="miscellaneous">
    <text evidence="5">Present with 2440 molecules/cell in log phase SD medium.</text>
</comment>
<comment type="similarity">
    <text evidence="6">Belongs to the inositol monophosphatase superfamily.</text>
</comment>
<protein>
    <recommendedName>
        <fullName>Inositol monophosphatase 1</fullName>
        <shortName>IMP 1</shortName>
        <shortName>IMPase 1</shortName>
        <ecNumber>3.1.3.25</ecNumber>
    </recommendedName>
    <alternativeName>
        <fullName>Inositol-1(or 4)-monophosphatase 1</fullName>
    </alternativeName>
</protein>
<accession>P38710</accession>
<accession>D3DKZ4</accession>
<sequence>MTIDLASIEKFLCELATEKVGPIIKSKSGTQKDYDLKTGSRSVDIVTAIDKQVEKLIWESVKTQYPTFKFIGEESYVKGETVITDDPTFIIDPIDGTTNFVHDFPFSCTSLGLTVNKEPVVGVIYNPHINLLVSASKGNGMRVNNKDYDYKSKLESMGSLILNKSVVALQPGSAREGKNFQTKMATYEKLLSCDYGFVHGFRNLGSSAMTMAYIAMGYLDSYWDGGCYSWDVCAGWCILKEVGGRVVGANPGEWSIDVDNRTYLAVRGTINNESDEQTKYITDFWNCVDGHLKYD</sequence>
<keyword id="KW-0963">Cytoplasm</keyword>
<keyword id="KW-0378">Hydrolase</keyword>
<keyword id="KW-0452">Lithium</keyword>
<keyword id="KW-0460">Magnesium</keyword>
<keyword id="KW-0479">Metal-binding</keyword>
<keyword id="KW-0539">Nucleus</keyword>
<keyword id="KW-1185">Reference proteome</keyword>
<evidence type="ECO:0000250" key="1"/>
<evidence type="ECO:0000269" key="2">
    <source>
    </source>
</evidence>
<evidence type="ECO:0000269" key="3">
    <source>
    </source>
</evidence>
<evidence type="ECO:0000269" key="4">
    <source>
    </source>
</evidence>
<evidence type="ECO:0000269" key="5">
    <source>
    </source>
</evidence>
<evidence type="ECO:0000305" key="6"/>
<organism>
    <name type="scientific">Saccharomyces cerevisiae (strain ATCC 204508 / S288c)</name>
    <name type="common">Baker's yeast</name>
    <dbReference type="NCBI Taxonomy" id="559292"/>
    <lineage>
        <taxon>Eukaryota</taxon>
        <taxon>Fungi</taxon>
        <taxon>Dikarya</taxon>
        <taxon>Ascomycota</taxon>
        <taxon>Saccharomycotina</taxon>
        <taxon>Saccharomycetes</taxon>
        <taxon>Saccharomycetales</taxon>
        <taxon>Saccharomycetaceae</taxon>
        <taxon>Saccharomyces</taxon>
    </lineage>
</organism>
<proteinExistence type="evidence at protein level"/>
<gene>
    <name type="primary">INM1</name>
    <name type="synonym">IMP1</name>
    <name type="ordered locus">YHR046C</name>
</gene>
<dbReference type="EC" id="3.1.3.25"/>
<dbReference type="EMBL" id="U00062">
    <property type="protein sequence ID" value="AAB68918.1"/>
    <property type="molecule type" value="Genomic_DNA"/>
</dbReference>
<dbReference type="EMBL" id="BK006934">
    <property type="protein sequence ID" value="DAA06738.1"/>
    <property type="molecule type" value="Genomic_DNA"/>
</dbReference>
<dbReference type="PIR" id="S46749">
    <property type="entry name" value="S46749"/>
</dbReference>
<dbReference type="RefSeq" id="NP_011912.1">
    <property type="nucleotide sequence ID" value="NM_001179176.1"/>
</dbReference>
<dbReference type="SMR" id="P38710"/>
<dbReference type="BioGRID" id="36478">
    <property type="interactions" value="135"/>
</dbReference>
<dbReference type="DIP" id="DIP-6506N"/>
<dbReference type="FunCoup" id="P38710">
    <property type="interactions" value="554"/>
</dbReference>
<dbReference type="IntAct" id="P38710">
    <property type="interactions" value="1"/>
</dbReference>
<dbReference type="MINT" id="P38710"/>
<dbReference type="STRING" id="4932.YHR046C"/>
<dbReference type="iPTMnet" id="P38710"/>
<dbReference type="PaxDb" id="4932-YHR046C"/>
<dbReference type="PeptideAtlas" id="P38710"/>
<dbReference type="EnsemblFungi" id="YHR046C_mRNA">
    <property type="protein sequence ID" value="YHR046C"/>
    <property type="gene ID" value="YHR046C"/>
</dbReference>
<dbReference type="GeneID" id="856442"/>
<dbReference type="KEGG" id="sce:YHR046C"/>
<dbReference type="AGR" id="SGD:S000001088"/>
<dbReference type="SGD" id="S000001088">
    <property type="gene designation" value="INM1"/>
</dbReference>
<dbReference type="VEuPathDB" id="FungiDB:YHR046C"/>
<dbReference type="eggNOG" id="KOG2951">
    <property type="taxonomic scope" value="Eukaryota"/>
</dbReference>
<dbReference type="GeneTree" id="ENSGT00940000169763"/>
<dbReference type="HOGENOM" id="CLU_044118_1_2_1"/>
<dbReference type="InParanoid" id="P38710"/>
<dbReference type="OMA" id="FNVMKPD"/>
<dbReference type="OrthoDB" id="10254945at2759"/>
<dbReference type="BioCyc" id="YEAST:YHR046C-MONOMER"/>
<dbReference type="Reactome" id="R-SCE-1855183">
    <property type="pathway name" value="Synthesis of IP2, IP, and Ins in the cytosol"/>
</dbReference>
<dbReference type="SABIO-RK" id="P38710"/>
<dbReference type="UniPathway" id="UPA00823">
    <property type="reaction ID" value="UER00788"/>
</dbReference>
<dbReference type="BioGRID-ORCS" id="856442">
    <property type="hits" value="0 hits in 10 CRISPR screens"/>
</dbReference>
<dbReference type="PRO" id="PR:P38710"/>
<dbReference type="Proteomes" id="UP000002311">
    <property type="component" value="Chromosome VIII"/>
</dbReference>
<dbReference type="RNAct" id="P38710">
    <property type="molecule type" value="protein"/>
</dbReference>
<dbReference type="GO" id="GO:0005737">
    <property type="term" value="C:cytoplasm"/>
    <property type="evidence" value="ECO:0007005"/>
    <property type="project" value="SGD"/>
</dbReference>
<dbReference type="GO" id="GO:0005634">
    <property type="term" value="C:nucleus"/>
    <property type="evidence" value="ECO:0007005"/>
    <property type="project" value="SGD"/>
</dbReference>
<dbReference type="GO" id="GO:0008934">
    <property type="term" value="F:inositol monophosphate 1-phosphatase activity"/>
    <property type="evidence" value="ECO:0000314"/>
    <property type="project" value="SGD"/>
</dbReference>
<dbReference type="GO" id="GO:0046872">
    <property type="term" value="F:metal ion binding"/>
    <property type="evidence" value="ECO:0007669"/>
    <property type="project" value="UniProtKB-KW"/>
</dbReference>
<dbReference type="GO" id="GO:0006021">
    <property type="term" value="P:inositol biosynthetic process"/>
    <property type="evidence" value="ECO:0007669"/>
    <property type="project" value="UniProtKB-UniPathway"/>
</dbReference>
<dbReference type="GO" id="GO:0006020">
    <property type="term" value="P:inositol metabolic process"/>
    <property type="evidence" value="ECO:0000318"/>
    <property type="project" value="GO_Central"/>
</dbReference>
<dbReference type="GO" id="GO:0071545">
    <property type="term" value="P:inositol phosphate catabolic process"/>
    <property type="evidence" value="ECO:0000314"/>
    <property type="project" value="SGD"/>
</dbReference>
<dbReference type="GO" id="GO:0046854">
    <property type="term" value="P:phosphatidylinositol phosphate biosynthetic process"/>
    <property type="evidence" value="ECO:0007669"/>
    <property type="project" value="InterPro"/>
</dbReference>
<dbReference type="GO" id="GO:0007165">
    <property type="term" value="P:signal transduction"/>
    <property type="evidence" value="ECO:0000318"/>
    <property type="project" value="GO_Central"/>
</dbReference>
<dbReference type="CDD" id="cd01639">
    <property type="entry name" value="IMPase"/>
    <property type="match status" value="1"/>
</dbReference>
<dbReference type="FunFam" id="3.30.540.10:FF:000013">
    <property type="entry name" value="Inositol-1-monophosphatase"/>
    <property type="match status" value="1"/>
</dbReference>
<dbReference type="FunFam" id="3.40.190.80:FF:000012">
    <property type="entry name" value="Inositol-1-monophosphatase"/>
    <property type="match status" value="1"/>
</dbReference>
<dbReference type="Gene3D" id="3.40.190.80">
    <property type="match status" value="1"/>
</dbReference>
<dbReference type="Gene3D" id="3.30.540.10">
    <property type="entry name" value="Fructose-1,6-Bisphosphatase, subunit A, domain 1"/>
    <property type="match status" value="1"/>
</dbReference>
<dbReference type="InterPro" id="IPR033942">
    <property type="entry name" value="IMPase"/>
</dbReference>
<dbReference type="InterPro" id="IPR020583">
    <property type="entry name" value="Inositol_monoP_metal-BS"/>
</dbReference>
<dbReference type="InterPro" id="IPR000760">
    <property type="entry name" value="Inositol_monophosphatase-like"/>
</dbReference>
<dbReference type="InterPro" id="IPR020550">
    <property type="entry name" value="Inositol_monophosphatase_CS"/>
</dbReference>
<dbReference type="PANTHER" id="PTHR20854">
    <property type="entry name" value="INOSITOL MONOPHOSPHATASE"/>
    <property type="match status" value="1"/>
</dbReference>
<dbReference type="PANTHER" id="PTHR20854:SF4">
    <property type="entry name" value="INOSITOL-1-MONOPHOSPHATASE-RELATED"/>
    <property type="match status" value="1"/>
</dbReference>
<dbReference type="Pfam" id="PF00459">
    <property type="entry name" value="Inositol_P"/>
    <property type="match status" value="1"/>
</dbReference>
<dbReference type="PRINTS" id="PR00377">
    <property type="entry name" value="IMPHPHTASES"/>
</dbReference>
<dbReference type="SUPFAM" id="SSF56655">
    <property type="entry name" value="Carbohydrate phosphatase"/>
    <property type="match status" value="1"/>
</dbReference>
<dbReference type="PROSITE" id="PS00629">
    <property type="entry name" value="IMP_1"/>
    <property type="match status" value="1"/>
</dbReference>
<dbReference type="PROSITE" id="PS00630">
    <property type="entry name" value="IMP_2"/>
    <property type="match status" value="1"/>
</dbReference>
<reference key="1">
    <citation type="journal article" date="1994" name="Science">
        <title>Complete nucleotide sequence of Saccharomyces cerevisiae chromosome VIII.</title>
        <authorList>
            <person name="Johnston M."/>
            <person name="Andrews S."/>
            <person name="Brinkman R."/>
            <person name="Cooper J."/>
            <person name="Ding H."/>
            <person name="Dover J."/>
            <person name="Du Z."/>
            <person name="Favello A."/>
            <person name="Fulton L."/>
            <person name="Gattung S."/>
            <person name="Geisel C."/>
            <person name="Kirsten J."/>
            <person name="Kucaba T."/>
            <person name="Hillier L.W."/>
            <person name="Jier M."/>
            <person name="Johnston L."/>
            <person name="Langston Y."/>
            <person name="Latreille P."/>
            <person name="Louis E.J."/>
            <person name="Macri C."/>
            <person name="Mardis E."/>
            <person name="Menezes S."/>
            <person name="Mouser L."/>
            <person name="Nhan M."/>
            <person name="Rifkin L."/>
            <person name="Riles L."/>
            <person name="St Peter H."/>
            <person name="Trevaskis E."/>
            <person name="Vaughan K."/>
            <person name="Vignati D."/>
            <person name="Wilcox L."/>
            <person name="Wohldman P."/>
            <person name="Waterston R."/>
            <person name="Wilson R."/>
            <person name="Vaudin M."/>
        </authorList>
    </citation>
    <scope>NUCLEOTIDE SEQUENCE [LARGE SCALE GENOMIC DNA]</scope>
    <source>
        <strain>ATCC 204508 / S288c</strain>
    </source>
</reference>
<reference key="2">
    <citation type="journal article" date="2014" name="G3 (Bethesda)">
        <title>The reference genome sequence of Saccharomyces cerevisiae: Then and now.</title>
        <authorList>
            <person name="Engel S.R."/>
            <person name="Dietrich F.S."/>
            <person name="Fisk D.G."/>
            <person name="Binkley G."/>
            <person name="Balakrishnan R."/>
            <person name="Costanzo M.C."/>
            <person name="Dwight S.S."/>
            <person name="Hitz B.C."/>
            <person name="Karra K."/>
            <person name="Nash R.S."/>
            <person name="Weng S."/>
            <person name="Wong E.D."/>
            <person name="Lloyd P."/>
            <person name="Skrzypek M.S."/>
            <person name="Miyasato S.R."/>
            <person name="Simison M."/>
            <person name="Cherry J.M."/>
        </authorList>
    </citation>
    <scope>GENOME REANNOTATION</scope>
    <source>
        <strain>ATCC 204508 / S288c</strain>
    </source>
</reference>
<reference key="3">
    <citation type="journal article" date="1999" name="Mol. Microbiol.">
        <title>The yeast inositol monophosphatase is a lithium- and sodium-sensitive enzyme encoded by a non-essential gene pair.</title>
        <authorList>
            <person name="Lopez F."/>
            <person name="Leube M."/>
            <person name="Gil-Mascarell R."/>
            <person name="Navarro-Avino J.P."/>
            <person name="Serrano R."/>
        </authorList>
    </citation>
    <scope>FUNCTION</scope>
    <scope>ACTIVITY REGULATION</scope>
    <scope>BIOPHYSICOCHEMICAL PROPERTIES</scope>
</reference>
<reference key="4">
    <citation type="journal article" date="2003" name="Biochem. Biophys. Res. Commun.">
        <title>Yeast inositol mono- and trisphosphate levels are modulated by inositol monophosphatase activity and nutrients.</title>
        <authorList>
            <person name="Navarro-Avino J.P."/>
            <person name="Belles J.M."/>
            <person name="Serrano R."/>
        </authorList>
    </citation>
    <scope>FUNCTION</scope>
</reference>
<reference key="5">
    <citation type="journal article" date="2003" name="Nature">
        <title>Global analysis of protein localization in budding yeast.</title>
        <authorList>
            <person name="Huh W.-K."/>
            <person name="Falvo J.V."/>
            <person name="Gerke L.C."/>
            <person name="Carroll A.S."/>
            <person name="Howson R.W."/>
            <person name="Weissman J.S."/>
            <person name="O'Shea E.K."/>
        </authorList>
    </citation>
    <scope>SUBCELLULAR LOCATION [LARGE SCALE ANALYSIS]</scope>
</reference>
<reference key="6">
    <citation type="journal article" date="2003" name="Nature">
        <title>Global analysis of protein expression in yeast.</title>
        <authorList>
            <person name="Ghaemmaghami S."/>
            <person name="Huh W.-K."/>
            <person name="Bower K."/>
            <person name="Howson R.W."/>
            <person name="Belle A."/>
            <person name="Dephoure N."/>
            <person name="O'Shea E.K."/>
            <person name="Weissman J.S."/>
        </authorList>
    </citation>
    <scope>LEVEL OF PROTEIN EXPRESSION [LARGE SCALE ANALYSIS]</scope>
</reference>
<feature type="chain" id="PRO_0000142585" description="Inositol monophosphatase 1">
    <location>
        <begin position="1"/>
        <end position="295"/>
    </location>
</feature>
<feature type="binding site" evidence="1">
    <location>
        <position position="73"/>
    </location>
    <ligand>
        <name>Mg(2+)</name>
        <dbReference type="ChEBI" id="CHEBI:18420"/>
        <label>1</label>
    </ligand>
</feature>
<feature type="binding site" evidence="1">
    <location>
        <position position="73"/>
    </location>
    <ligand>
        <name>substrate</name>
    </ligand>
</feature>
<feature type="binding site" evidence="1">
    <location>
        <position position="92"/>
    </location>
    <ligand>
        <name>Mg(2+)</name>
        <dbReference type="ChEBI" id="CHEBI:18420"/>
        <label>1</label>
    </ligand>
</feature>
<feature type="binding site" evidence="1">
    <location>
        <position position="92"/>
    </location>
    <ligand>
        <name>Mg(2+)</name>
        <dbReference type="ChEBI" id="CHEBI:18420"/>
        <label>2</label>
    </ligand>
</feature>
<feature type="binding site" evidence="1">
    <location>
        <begin position="94"/>
        <end position="97"/>
    </location>
    <ligand>
        <name>substrate</name>
    </ligand>
</feature>
<feature type="binding site" evidence="1">
    <location>
        <position position="94"/>
    </location>
    <ligand>
        <name>Mg(2+)</name>
        <dbReference type="ChEBI" id="CHEBI:18420"/>
        <label>1</label>
    </ligand>
</feature>
<feature type="binding site" evidence="1">
    <location>
        <position position="95"/>
    </location>
    <ligand>
        <name>Mg(2+)</name>
        <dbReference type="ChEBI" id="CHEBI:18420"/>
        <label>2</label>
    </ligand>
</feature>
<feature type="binding site" evidence="1">
    <location>
        <position position="231"/>
    </location>
    <ligand>
        <name>Mg(2+)</name>
        <dbReference type="ChEBI" id="CHEBI:18420"/>
        <label>2</label>
    </ligand>
</feature>
<feature type="binding site" evidence="1">
    <location>
        <position position="231"/>
    </location>
    <ligand>
        <name>substrate</name>
    </ligand>
</feature>
<name>INM1_YEAST</name>